<feature type="chain" id="PRO_1000143157" description="Small ribosomal subunit protein uS15">
    <location>
        <begin position="1"/>
        <end position="89"/>
    </location>
</feature>
<feature type="region of interest" description="Disordered" evidence="2">
    <location>
        <begin position="1"/>
        <end position="24"/>
    </location>
</feature>
<feature type="compositionally biased region" description="Basic and acidic residues" evidence="2">
    <location>
        <begin position="1"/>
        <end position="16"/>
    </location>
</feature>
<accession>B2U7R7</accession>
<sequence>MSVADIKKQDIVKDNGRSANDTGSPEVQVALLTARINELQPHFKAHMKDHHSRRGLLRMVSRRRRLLDYLKSKDADRYTALVAKLGLRK</sequence>
<proteinExistence type="inferred from homology"/>
<evidence type="ECO:0000255" key="1">
    <source>
        <dbReference type="HAMAP-Rule" id="MF_01343"/>
    </source>
</evidence>
<evidence type="ECO:0000256" key="2">
    <source>
        <dbReference type="SAM" id="MobiDB-lite"/>
    </source>
</evidence>
<evidence type="ECO:0000305" key="3"/>
<reference key="1">
    <citation type="submission" date="2008-05" db="EMBL/GenBank/DDBJ databases">
        <title>Complete sequence of chromosome 1 of Ralstonia pickettii 12J.</title>
        <authorList>
            <person name="Lucas S."/>
            <person name="Copeland A."/>
            <person name="Lapidus A."/>
            <person name="Glavina del Rio T."/>
            <person name="Dalin E."/>
            <person name="Tice H."/>
            <person name="Bruce D."/>
            <person name="Goodwin L."/>
            <person name="Pitluck S."/>
            <person name="Meincke L."/>
            <person name="Brettin T."/>
            <person name="Detter J.C."/>
            <person name="Han C."/>
            <person name="Kuske C.R."/>
            <person name="Schmutz J."/>
            <person name="Larimer F."/>
            <person name="Land M."/>
            <person name="Hauser L."/>
            <person name="Kyrpides N."/>
            <person name="Mikhailova N."/>
            <person name="Marsh T."/>
            <person name="Richardson P."/>
        </authorList>
    </citation>
    <scope>NUCLEOTIDE SEQUENCE [LARGE SCALE GENOMIC DNA]</scope>
    <source>
        <strain>12J</strain>
    </source>
</reference>
<dbReference type="EMBL" id="CP001068">
    <property type="protein sequence ID" value="ACD27354.1"/>
    <property type="molecule type" value="Genomic_DNA"/>
</dbReference>
<dbReference type="SMR" id="B2U7R7"/>
<dbReference type="STRING" id="402626.Rpic_2220"/>
<dbReference type="KEGG" id="rpi:Rpic_2220"/>
<dbReference type="eggNOG" id="COG0184">
    <property type="taxonomic scope" value="Bacteria"/>
</dbReference>
<dbReference type="HOGENOM" id="CLU_148518_0_0_4"/>
<dbReference type="GO" id="GO:0022627">
    <property type="term" value="C:cytosolic small ribosomal subunit"/>
    <property type="evidence" value="ECO:0007669"/>
    <property type="project" value="TreeGrafter"/>
</dbReference>
<dbReference type="GO" id="GO:0019843">
    <property type="term" value="F:rRNA binding"/>
    <property type="evidence" value="ECO:0007669"/>
    <property type="project" value="UniProtKB-UniRule"/>
</dbReference>
<dbReference type="GO" id="GO:0003735">
    <property type="term" value="F:structural constituent of ribosome"/>
    <property type="evidence" value="ECO:0007669"/>
    <property type="project" value="InterPro"/>
</dbReference>
<dbReference type="GO" id="GO:0006412">
    <property type="term" value="P:translation"/>
    <property type="evidence" value="ECO:0007669"/>
    <property type="project" value="UniProtKB-UniRule"/>
</dbReference>
<dbReference type="CDD" id="cd00353">
    <property type="entry name" value="Ribosomal_S15p_S13e"/>
    <property type="match status" value="1"/>
</dbReference>
<dbReference type="FunFam" id="1.10.287.10:FF:000002">
    <property type="entry name" value="30S ribosomal protein S15"/>
    <property type="match status" value="1"/>
</dbReference>
<dbReference type="Gene3D" id="6.10.250.3130">
    <property type="match status" value="1"/>
</dbReference>
<dbReference type="Gene3D" id="1.10.287.10">
    <property type="entry name" value="S15/NS1, RNA-binding"/>
    <property type="match status" value="1"/>
</dbReference>
<dbReference type="HAMAP" id="MF_01343_B">
    <property type="entry name" value="Ribosomal_uS15_B"/>
    <property type="match status" value="1"/>
</dbReference>
<dbReference type="InterPro" id="IPR000589">
    <property type="entry name" value="Ribosomal_uS15"/>
</dbReference>
<dbReference type="InterPro" id="IPR005290">
    <property type="entry name" value="Ribosomal_uS15_bac-type"/>
</dbReference>
<dbReference type="InterPro" id="IPR009068">
    <property type="entry name" value="uS15_NS1_RNA-bd_sf"/>
</dbReference>
<dbReference type="NCBIfam" id="TIGR00952">
    <property type="entry name" value="S15_bact"/>
    <property type="match status" value="1"/>
</dbReference>
<dbReference type="PANTHER" id="PTHR23321">
    <property type="entry name" value="RIBOSOMAL PROTEIN S15, BACTERIAL AND ORGANELLAR"/>
    <property type="match status" value="1"/>
</dbReference>
<dbReference type="PANTHER" id="PTHR23321:SF26">
    <property type="entry name" value="SMALL RIBOSOMAL SUBUNIT PROTEIN US15M"/>
    <property type="match status" value="1"/>
</dbReference>
<dbReference type="Pfam" id="PF00312">
    <property type="entry name" value="Ribosomal_S15"/>
    <property type="match status" value="1"/>
</dbReference>
<dbReference type="SMART" id="SM01387">
    <property type="entry name" value="Ribosomal_S15"/>
    <property type="match status" value="1"/>
</dbReference>
<dbReference type="SUPFAM" id="SSF47060">
    <property type="entry name" value="S15/NS1 RNA-binding domain"/>
    <property type="match status" value="1"/>
</dbReference>
<dbReference type="PROSITE" id="PS00362">
    <property type="entry name" value="RIBOSOMAL_S15"/>
    <property type="match status" value="1"/>
</dbReference>
<keyword id="KW-0687">Ribonucleoprotein</keyword>
<keyword id="KW-0689">Ribosomal protein</keyword>
<keyword id="KW-0694">RNA-binding</keyword>
<keyword id="KW-0699">rRNA-binding</keyword>
<gene>
    <name evidence="1" type="primary">rpsO</name>
    <name type="ordered locus">Rpic_2220</name>
</gene>
<name>RS15_RALPJ</name>
<organism>
    <name type="scientific">Ralstonia pickettii (strain 12J)</name>
    <dbReference type="NCBI Taxonomy" id="402626"/>
    <lineage>
        <taxon>Bacteria</taxon>
        <taxon>Pseudomonadati</taxon>
        <taxon>Pseudomonadota</taxon>
        <taxon>Betaproteobacteria</taxon>
        <taxon>Burkholderiales</taxon>
        <taxon>Burkholderiaceae</taxon>
        <taxon>Ralstonia</taxon>
    </lineage>
</organism>
<protein>
    <recommendedName>
        <fullName evidence="1">Small ribosomal subunit protein uS15</fullName>
    </recommendedName>
    <alternativeName>
        <fullName evidence="3">30S ribosomal protein S15</fullName>
    </alternativeName>
</protein>
<comment type="function">
    <text evidence="1">One of the primary rRNA binding proteins, it binds directly to 16S rRNA where it helps nucleate assembly of the platform of the 30S subunit by binding and bridging several RNA helices of the 16S rRNA.</text>
</comment>
<comment type="function">
    <text evidence="1">Forms an intersubunit bridge (bridge B4) with the 23S rRNA of the 50S subunit in the ribosome.</text>
</comment>
<comment type="subunit">
    <text evidence="1">Part of the 30S ribosomal subunit. Forms a bridge to the 50S subunit in the 70S ribosome, contacting the 23S rRNA.</text>
</comment>
<comment type="similarity">
    <text evidence="1">Belongs to the universal ribosomal protein uS15 family.</text>
</comment>